<dbReference type="EMBL" id="CP000975">
    <property type="protein sequence ID" value="ACD82980.1"/>
    <property type="molecule type" value="Genomic_DNA"/>
</dbReference>
<dbReference type="RefSeq" id="WP_012463262.1">
    <property type="nucleotide sequence ID" value="NC_010794.1"/>
</dbReference>
<dbReference type="STRING" id="481448.Minf_0925"/>
<dbReference type="KEGG" id="min:Minf_0925"/>
<dbReference type="eggNOG" id="COG0759">
    <property type="taxonomic scope" value="Bacteria"/>
</dbReference>
<dbReference type="HOGENOM" id="CLU_144811_5_3_0"/>
<dbReference type="OrthoDB" id="9801753at2"/>
<dbReference type="Proteomes" id="UP000009149">
    <property type="component" value="Chromosome"/>
</dbReference>
<dbReference type="GO" id="GO:0005886">
    <property type="term" value="C:plasma membrane"/>
    <property type="evidence" value="ECO:0007669"/>
    <property type="project" value="UniProtKB-SubCell"/>
</dbReference>
<dbReference type="HAMAP" id="MF_00386">
    <property type="entry name" value="UPF0161_YidD"/>
    <property type="match status" value="1"/>
</dbReference>
<dbReference type="InterPro" id="IPR002696">
    <property type="entry name" value="Membr_insert_effic_factor_YidD"/>
</dbReference>
<dbReference type="NCBIfam" id="TIGR00278">
    <property type="entry name" value="membrane protein insertion efficiency factor YidD"/>
    <property type="match status" value="1"/>
</dbReference>
<dbReference type="PANTHER" id="PTHR33383">
    <property type="entry name" value="MEMBRANE PROTEIN INSERTION EFFICIENCY FACTOR-RELATED"/>
    <property type="match status" value="1"/>
</dbReference>
<dbReference type="PANTHER" id="PTHR33383:SF1">
    <property type="entry name" value="MEMBRANE PROTEIN INSERTION EFFICIENCY FACTOR-RELATED"/>
    <property type="match status" value="1"/>
</dbReference>
<dbReference type="Pfam" id="PF01809">
    <property type="entry name" value="YidD"/>
    <property type="match status" value="1"/>
</dbReference>
<dbReference type="SMART" id="SM01234">
    <property type="entry name" value="Haemolytic"/>
    <property type="match status" value="1"/>
</dbReference>
<name>YIDD_METI4</name>
<proteinExistence type="inferred from homology"/>
<feature type="chain" id="PRO_1000197761" description="Putative membrane protein insertion efficiency factor">
    <location>
        <begin position="1"/>
        <end position="106"/>
    </location>
</feature>
<organism>
    <name type="scientific">Methylacidiphilum infernorum (isolate V4)</name>
    <name type="common">Methylokorus infernorum (strain V4)</name>
    <dbReference type="NCBI Taxonomy" id="481448"/>
    <lineage>
        <taxon>Bacteria</taxon>
        <taxon>Pseudomonadati</taxon>
        <taxon>Verrucomicrobiota</taxon>
        <taxon>Methylacidiphilae</taxon>
        <taxon>Methylacidiphilales</taxon>
        <taxon>Methylacidiphilaceae</taxon>
        <taxon>Methylacidiphilum (ex Ratnadevi et al. 2023)</taxon>
    </lineage>
</organism>
<sequence>MKKVVFFLLDFYRYGLSSFRQTLGMYGVCRYYPTCSQYCREAVQKHGIIHGLYLCLRRLMRCHPWGAAGWDPVPEKSNLGIKRTKKADHPLKKKVSLMRVMHLFFK</sequence>
<accession>B3DUH7</accession>
<reference key="1">
    <citation type="journal article" date="2008" name="Biol. Direct">
        <title>Complete genome sequence of the extremely acidophilic methanotroph isolate V4, Methylacidiphilum infernorum, a representative of the bacterial phylum Verrucomicrobia.</title>
        <authorList>
            <person name="Hou S."/>
            <person name="Makarova K.S."/>
            <person name="Saw J.H."/>
            <person name="Senin P."/>
            <person name="Ly B.V."/>
            <person name="Zhou Z."/>
            <person name="Ren Y."/>
            <person name="Wang J."/>
            <person name="Galperin M.Y."/>
            <person name="Omelchenko M.V."/>
            <person name="Wolf Y.I."/>
            <person name="Yutin N."/>
            <person name="Koonin E.V."/>
            <person name="Stott M.B."/>
            <person name="Mountain B.W."/>
            <person name="Crowe M.A."/>
            <person name="Smirnova A.V."/>
            <person name="Dunfield P.F."/>
            <person name="Feng L."/>
            <person name="Wang L."/>
            <person name="Alam M."/>
        </authorList>
    </citation>
    <scope>NUCLEOTIDE SEQUENCE [LARGE SCALE GENOMIC DNA]</scope>
    <source>
        <strain>Isolate V4</strain>
    </source>
</reference>
<protein>
    <recommendedName>
        <fullName evidence="1">Putative membrane protein insertion efficiency factor</fullName>
    </recommendedName>
</protein>
<evidence type="ECO:0000255" key="1">
    <source>
        <dbReference type="HAMAP-Rule" id="MF_00386"/>
    </source>
</evidence>
<keyword id="KW-0997">Cell inner membrane</keyword>
<keyword id="KW-1003">Cell membrane</keyword>
<keyword id="KW-0472">Membrane</keyword>
<gene>
    <name type="ordered locus">Minf_0925</name>
</gene>
<comment type="function">
    <text evidence="1">Could be involved in insertion of integral membrane proteins into the membrane.</text>
</comment>
<comment type="subcellular location">
    <subcellularLocation>
        <location evidence="1">Cell inner membrane</location>
        <topology evidence="1">Peripheral membrane protein</topology>
        <orientation evidence="1">Cytoplasmic side</orientation>
    </subcellularLocation>
</comment>
<comment type="similarity">
    <text evidence="1">Belongs to the UPF0161 family.</text>
</comment>